<accession>P9WLQ4</accession>
<accession>L0T860</accession>
<accession>P95269</accession>
<dbReference type="EMBL" id="AE000516">
    <property type="protein sequence ID" value="AAK46267.1"/>
    <property type="status" value="ALT_INIT"/>
    <property type="molecule type" value="Genomic_DNA"/>
</dbReference>
<dbReference type="PIR" id="E70637">
    <property type="entry name" value="E70637"/>
</dbReference>
<dbReference type="RefSeq" id="WP_003903691.1">
    <property type="nucleotide sequence ID" value="NZ_KK341227.1"/>
</dbReference>
<dbReference type="KEGG" id="mtc:MT1995"/>
<dbReference type="PATRIC" id="fig|83331.31.peg.2149"/>
<dbReference type="HOGENOM" id="CLU_022065_0_0_11"/>
<dbReference type="Proteomes" id="UP000001020">
    <property type="component" value="Chromosome"/>
</dbReference>
<dbReference type="GO" id="GO:0004519">
    <property type="term" value="F:endonuclease activity"/>
    <property type="evidence" value="ECO:0007669"/>
    <property type="project" value="InterPro"/>
</dbReference>
<dbReference type="GO" id="GO:0003676">
    <property type="term" value="F:nucleic acid binding"/>
    <property type="evidence" value="ECO:0007669"/>
    <property type="project" value="InterPro"/>
</dbReference>
<dbReference type="GO" id="GO:0008270">
    <property type="term" value="F:zinc ion binding"/>
    <property type="evidence" value="ECO:0007669"/>
    <property type="project" value="InterPro"/>
</dbReference>
<dbReference type="CDD" id="cd00085">
    <property type="entry name" value="HNHc"/>
    <property type="match status" value="1"/>
</dbReference>
<dbReference type="InterPro" id="IPR003870">
    <property type="entry name" value="DUF222"/>
</dbReference>
<dbReference type="InterPro" id="IPR002711">
    <property type="entry name" value="HNH"/>
</dbReference>
<dbReference type="InterPro" id="IPR003615">
    <property type="entry name" value="HNH_nuc"/>
</dbReference>
<dbReference type="Pfam" id="PF02720">
    <property type="entry name" value="DUF222"/>
    <property type="match status" value="1"/>
</dbReference>
<dbReference type="Pfam" id="PF01844">
    <property type="entry name" value="HNH"/>
    <property type="match status" value="1"/>
</dbReference>
<dbReference type="SMART" id="SM00507">
    <property type="entry name" value="HNHc"/>
    <property type="match status" value="1"/>
</dbReference>
<gene>
    <name type="ordered locus">MT1995</name>
</gene>
<evidence type="ECO:0000256" key="1">
    <source>
        <dbReference type="SAM" id="MobiDB-lite"/>
    </source>
</evidence>
<evidence type="ECO:0000305" key="2"/>
<keyword id="KW-1185">Reference proteome</keyword>
<reference key="1">
    <citation type="journal article" date="2002" name="J. Bacteriol.">
        <title>Whole-genome comparison of Mycobacterium tuberculosis clinical and laboratory strains.</title>
        <authorList>
            <person name="Fleischmann R.D."/>
            <person name="Alland D."/>
            <person name="Eisen J.A."/>
            <person name="Carpenter L."/>
            <person name="White O."/>
            <person name="Peterson J.D."/>
            <person name="DeBoy R.T."/>
            <person name="Dodson R.J."/>
            <person name="Gwinn M.L."/>
            <person name="Haft D.H."/>
            <person name="Hickey E.K."/>
            <person name="Kolonay J.F."/>
            <person name="Nelson W.C."/>
            <person name="Umayam L.A."/>
            <person name="Ermolaeva M.D."/>
            <person name="Salzberg S.L."/>
            <person name="Delcher A."/>
            <person name="Utterback T.R."/>
            <person name="Weidman J.F."/>
            <person name="Khouri H.M."/>
            <person name="Gill J."/>
            <person name="Mikula A."/>
            <person name="Bishai W."/>
            <person name="Jacobs W.R. Jr."/>
            <person name="Venter J.C."/>
            <person name="Fraser C.M."/>
        </authorList>
    </citation>
    <scope>NUCLEOTIDE SEQUENCE [LARGE SCALE GENOMIC DNA]</scope>
    <source>
        <strain>CDC 1551 / Oshkosh</strain>
    </source>
</reference>
<sequence>MRSDTREEISAALDAYHASLSRVLDLKCDALTTPELLACLQRLEVERRRQGAAEHALINQLAGQACEEELGGTLRTALANRLHITPGEASRRIAEAEDLGERRALTGEPLPAQLTATAAAQREGKIGREHIKEIQAFFKELSAAVDLGIREAAEAQLAELATSRRPDHLHGLATQLMDWLHPDGNFSDQERARKRGITMGKQEFDGMSRISGLLTPELRATIEAVLAKLAAPGACNPDDQTPVVDDTPDADAVRRDTRSQAQRHHDGLLAGLRGLLASGELGQHRGLPVTVVVSTTLKELEAATGKGVTGGGSRVPMSDLIRMASNAHHYLALFDGAKPLALYHTKRLASPAQRIMLYAKDRGCSRPGCDAPAYHSEVHHVTPWTTTHRTDINDLTLACGPDNRLVEKGWKTRKNAKGDTEWLPPAHLDHGQPRINRYHHPEKILCEPDDDEPH</sequence>
<feature type="chain" id="PRO_0000427438" description="Uncharacterized protein MT1995">
    <location>
        <begin position="1"/>
        <end position="454"/>
    </location>
</feature>
<feature type="domain" description="HNH">
    <location>
        <begin position="364"/>
        <end position="405"/>
    </location>
</feature>
<feature type="region of interest" description="Disordered" evidence="1">
    <location>
        <begin position="415"/>
        <end position="434"/>
    </location>
</feature>
<organism>
    <name type="scientific">Mycobacterium tuberculosis (strain CDC 1551 / Oshkosh)</name>
    <dbReference type="NCBI Taxonomy" id="83331"/>
    <lineage>
        <taxon>Bacteria</taxon>
        <taxon>Bacillati</taxon>
        <taxon>Actinomycetota</taxon>
        <taxon>Actinomycetes</taxon>
        <taxon>Mycobacteriales</taxon>
        <taxon>Mycobacteriaceae</taxon>
        <taxon>Mycobacterium</taxon>
        <taxon>Mycobacterium tuberculosis complex</taxon>
    </lineage>
</organism>
<comment type="similarity">
    <text evidence="2">Belongs to the Rv1128c/1148c/1588c/1702c/1945/3466 family.</text>
</comment>
<comment type="sequence caution" evidence="2">
    <conflict type="erroneous initiation">
        <sequence resource="EMBL-CDS" id="AAK46267"/>
    </conflict>
</comment>
<name>Y1945_MYCTO</name>
<protein>
    <recommendedName>
        <fullName>Uncharacterized protein MT1995</fullName>
    </recommendedName>
</protein>
<proteinExistence type="inferred from homology"/>